<feature type="chain" id="PRO_0000118269" description="NADH-ubiquinone oxidoreductase chain 6">
    <location>
        <begin position="1"/>
        <end position="173"/>
    </location>
</feature>
<feature type="transmembrane region" description="Helical" evidence="2">
    <location>
        <begin position="1"/>
        <end position="21"/>
    </location>
</feature>
<feature type="transmembrane region" description="Helical" evidence="2">
    <location>
        <begin position="27"/>
        <end position="47"/>
    </location>
</feature>
<feature type="transmembrane region" description="Helical" evidence="2">
    <location>
        <begin position="48"/>
        <end position="68"/>
    </location>
</feature>
<feature type="transmembrane region" description="Helical" evidence="2">
    <location>
        <begin position="87"/>
        <end position="107"/>
    </location>
</feature>
<feature type="transmembrane region" description="Helical" evidence="2">
    <location>
        <begin position="139"/>
        <end position="159"/>
    </location>
</feature>
<sequence>MTYFVIFLGVCFMLGTLAVASNPSPYYGVVGLVLASVVGCGWLVNLGVSFVSLVLFMIYLGGMLVVFVYSVSLAADPYPEAWGSWRVMGYGLGFVLVVCMGMGLGGFVDFWKIGVTTVDSGGMSFVRLDFGGVAAFYSYGVGLFLVAGWGLLLVLFVVLELVRGLSRGAIRAV</sequence>
<name>NU6M_COTJA</name>
<protein>
    <recommendedName>
        <fullName>NADH-ubiquinone oxidoreductase chain 6</fullName>
        <ecNumber>7.1.1.2</ecNumber>
    </recommendedName>
    <alternativeName>
        <fullName>NADH dehydrogenase subunit 6</fullName>
    </alternativeName>
</protein>
<organism>
    <name type="scientific">Coturnix japonica</name>
    <name type="common">Japanese quail</name>
    <name type="synonym">Coturnix coturnix japonica</name>
    <dbReference type="NCBI Taxonomy" id="93934"/>
    <lineage>
        <taxon>Eukaryota</taxon>
        <taxon>Metazoa</taxon>
        <taxon>Chordata</taxon>
        <taxon>Craniata</taxon>
        <taxon>Vertebrata</taxon>
        <taxon>Euteleostomi</taxon>
        <taxon>Archelosauria</taxon>
        <taxon>Archosauria</taxon>
        <taxon>Dinosauria</taxon>
        <taxon>Saurischia</taxon>
        <taxon>Theropoda</taxon>
        <taxon>Coelurosauria</taxon>
        <taxon>Aves</taxon>
        <taxon>Neognathae</taxon>
        <taxon>Galloanserae</taxon>
        <taxon>Galliformes</taxon>
        <taxon>Phasianidae</taxon>
        <taxon>Perdicinae</taxon>
        <taxon>Coturnix</taxon>
    </lineage>
</organism>
<gene>
    <name type="primary">MT-ND6</name>
    <name type="synonym">MTND6</name>
    <name type="synonym">NADH6</name>
    <name type="synonym">ND6</name>
</gene>
<reference key="1">
    <citation type="journal article" date="2001" name="Anim. Genet.">
        <title>Complete sequence of the Japanese quail (Coturnix japonica) mitochondrial genome and its genetic relationship with related species.</title>
        <authorList>
            <person name="Nishibori M."/>
            <person name="Hayashi T."/>
            <person name="Tsudzuki M."/>
            <person name="Yamamoto Y."/>
            <person name="Yasue H."/>
        </authorList>
    </citation>
    <scope>NUCLEOTIDE SEQUENCE [GENOMIC DNA]</scope>
    <source>
        <tissue>Blood</tissue>
    </source>
</reference>
<reference key="2">
    <citation type="journal article" date="1991" name="J. Mol. Evol.">
        <title>Nucleotide sequence and evolution of coding and noncoding regions of a quail mitochondrial genome.</title>
        <authorList>
            <person name="Desjardins P."/>
            <person name="Morais R."/>
        </authorList>
    </citation>
    <scope>NUCLEOTIDE SEQUENCE [GENOMIC DNA] OF 1-77</scope>
    <source>
        <tissue>Liver</tissue>
    </source>
</reference>
<proteinExistence type="inferred from homology"/>
<evidence type="ECO:0000250" key="1"/>
<evidence type="ECO:0000255" key="2"/>
<evidence type="ECO:0000305" key="3"/>
<keyword id="KW-0249">Electron transport</keyword>
<keyword id="KW-0472">Membrane</keyword>
<keyword id="KW-0496">Mitochondrion</keyword>
<keyword id="KW-0520">NAD</keyword>
<keyword id="KW-1185">Reference proteome</keyword>
<keyword id="KW-0679">Respiratory chain</keyword>
<keyword id="KW-1278">Translocase</keyword>
<keyword id="KW-0812">Transmembrane</keyword>
<keyword id="KW-1133">Transmembrane helix</keyword>
<keyword id="KW-0813">Transport</keyword>
<keyword id="KW-0830">Ubiquinone</keyword>
<dbReference type="EC" id="7.1.1.2"/>
<dbReference type="EMBL" id="AP003195">
    <property type="protein sequence ID" value="BAB62927.1"/>
    <property type="molecule type" value="Genomic_DNA"/>
</dbReference>
<dbReference type="EMBL" id="X57245">
    <property type="protein sequence ID" value="CAA40521.1"/>
    <property type="molecule type" value="Genomic_DNA"/>
</dbReference>
<dbReference type="PIR" id="S25425">
    <property type="entry name" value="S25425"/>
</dbReference>
<dbReference type="RefSeq" id="NP_572026.1">
    <property type="nucleotide sequence ID" value="NC_003408.1"/>
</dbReference>
<dbReference type="Ensembl" id="ENSCJPT00005000037.1">
    <property type="protein sequence ID" value="ENSCJPP00005000014.1"/>
    <property type="gene ID" value="ENSCJPG00005000037.1"/>
</dbReference>
<dbReference type="GeneID" id="804663"/>
<dbReference type="KEGG" id="cjo:804663"/>
<dbReference type="CTD" id="4541"/>
<dbReference type="GeneTree" id="ENSGT00390000003988"/>
<dbReference type="OrthoDB" id="9837654at2759"/>
<dbReference type="Proteomes" id="UP000694412">
    <property type="component" value="Unassembled WGS sequence"/>
</dbReference>
<dbReference type="GO" id="GO:0005743">
    <property type="term" value="C:mitochondrial inner membrane"/>
    <property type="evidence" value="ECO:0007669"/>
    <property type="project" value="Ensembl"/>
</dbReference>
<dbReference type="GO" id="GO:0045271">
    <property type="term" value="C:respiratory chain complex I"/>
    <property type="evidence" value="ECO:0007669"/>
    <property type="project" value="Ensembl"/>
</dbReference>
<dbReference type="GO" id="GO:0008137">
    <property type="term" value="F:NADH dehydrogenase (ubiquinone) activity"/>
    <property type="evidence" value="ECO:0007669"/>
    <property type="project" value="UniProtKB-EC"/>
</dbReference>
<dbReference type="GO" id="GO:0006120">
    <property type="term" value="P:mitochondrial electron transport, NADH to ubiquinone"/>
    <property type="evidence" value="ECO:0007669"/>
    <property type="project" value="Ensembl"/>
</dbReference>
<dbReference type="GO" id="GO:0032981">
    <property type="term" value="P:mitochondrial respiratory chain complex I assembly"/>
    <property type="evidence" value="ECO:0007669"/>
    <property type="project" value="Ensembl"/>
</dbReference>
<dbReference type="Gene3D" id="1.20.120.1200">
    <property type="entry name" value="NADH-ubiquinone/plastoquinone oxidoreductase chain 6, subunit NuoJ"/>
    <property type="match status" value="1"/>
</dbReference>
<dbReference type="InterPro" id="IPR050269">
    <property type="entry name" value="ComplexI_Subunit6"/>
</dbReference>
<dbReference type="InterPro" id="IPR001457">
    <property type="entry name" value="NADH_UbQ/plastoQ_OxRdtase_su6"/>
</dbReference>
<dbReference type="InterPro" id="IPR042106">
    <property type="entry name" value="Nuo/plastoQ_OxRdtase_6_NuoJ"/>
</dbReference>
<dbReference type="PANTHER" id="PTHR11435">
    <property type="entry name" value="NADH UBIQUINONE OXIDOREDUCTASE SUBUNIT ND6"/>
    <property type="match status" value="1"/>
</dbReference>
<dbReference type="PANTHER" id="PTHR11435:SF1">
    <property type="entry name" value="NADH-UBIQUINONE OXIDOREDUCTASE CHAIN 6"/>
    <property type="match status" value="1"/>
</dbReference>
<dbReference type="Pfam" id="PF00499">
    <property type="entry name" value="Oxidored_q3"/>
    <property type="match status" value="1"/>
</dbReference>
<comment type="function">
    <text evidence="1">Core subunit of the mitochondrial membrane respiratory chain NADH dehydrogenase (Complex I) that is believed to belong to the minimal assembly required for catalysis. Complex I functions in the transfer of electrons from NADH to the respiratory chain. The immediate electron acceptor for the enzyme is believed to be ubiquinone (By similarity).</text>
</comment>
<comment type="catalytic activity">
    <reaction>
        <text>a ubiquinone + NADH + 5 H(+)(in) = a ubiquinol + NAD(+) + 4 H(+)(out)</text>
        <dbReference type="Rhea" id="RHEA:29091"/>
        <dbReference type="Rhea" id="RHEA-COMP:9565"/>
        <dbReference type="Rhea" id="RHEA-COMP:9566"/>
        <dbReference type="ChEBI" id="CHEBI:15378"/>
        <dbReference type="ChEBI" id="CHEBI:16389"/>
        <dbReference type="ChEBI" id="CHEBI:17976"/>
        <dbReference type="ChEBI" id="CHEBI:57540"/>
        <dbReference type="ChEBI" id="CHEBI:57945"/>
        <dbReference type="EC" id="7.1.1.2"/>
    </reaction>
</comment>
<comment type="subcellular location">
    <subcellularLocation>
        <location evidence="3">Mitochondrion membrane</location>
        <topology evidence="3">Multi-pass membrane protein</topology>
    </subcellularLocation>
</comment>
<comment type="similarity">
    <text evidence="3">Belongs to the complex I subunit 6 family.</text>
</comment>
<geneLocation type="mitochondrion"/>
<accession>P24981</accession>
<accession>Q8SEW2</accession>